<protein>
    <recommendedName>
        <fullName evidence="1">Inosine triphosphate pyrophosphatase</fullName>
        <shortName evidence="1">ITPase</shortName>
        <shortName evidence="1">Inosine triphosphatase</shortName>
        <ecNumber evidence="1">3.6.1.66</ecNumber>
    </recommendedName>
    <alternativeName>
        <fullName evidence="1">Non-canonical purine NTP pyrophosphatase</fullName>
    </alternativeName>
    <alternativeName>
        <fullName evidence="1">Non-standard purine NTP pyrophosphatase</fullName>
    </alternativeName>
    <alternativeName>
        <fullName evidence="1">Nucleoside-triphosphate diphosphatase</fullName>
    </alternativeName>
    <alternativeName>
        <fullName evidence="1">Nucleoside-triphosphate pyrophosphatase</fullName>
        <shortName evidence="1">NTPase</shortName>
    </alternativeName>
    <alternativeName>
        <fullName evidence="1">XTP/dITP diphosphatase</fullName>
    </alternativeName>
</protein>
<keyword id="KW-0963">Cytoplasm</keyword>
<keyword id="KW-0378">Hydrolase</keyword>
<keyword id="KW-0460">Magnesium</keyword>
<keyword id="KW-0464">Manganese</keyword>
<keyword id="KW-0479">Metal-binding</keyword>
<keyword id="KW-0546">Nucleotide metabolism</keyword>
<keyword id="KW-0547">Nucleotide-binding</keyword>
<keyword id="KW-0539">Nucleus</keyword>
<keyword id="KW-1185">Reference proteome</keyword>
<reference key="1">
    <citation type="submission" date="2009-12" db="EMBL/GenBank/DDBJ databases">
        <title>The draft genome of Batrachochytrium dendrobatidis.</title>
        <authorList>
            <consortium name="US DOE Joint Genome Institute (JGI-PGF)"/>
            <person name="Kuo A."/>
            <person name="Salamov A."/>
            <person name="Schmutz J."/>
            <person name="Lucas S."/>
            <person name="Pitluck S."/>
            <person name="Rosenblum E."/>
            <person name="Stajich J."/>
            <person name="Eisen M."/>
            <person name="Grigoriev I.V."/>
        </authorList>
    </citation>
    <scope>NUCLEOTIDE SEQUENCE [LARGE SCALE GENOMIC DNA]</scope>
    <source>
        <strain>JAM81 / FGSC 10211</strain>
    </source>
</reference>
<accession>F4P9L8</accession>
<name>ITPA_BATDJ</name>
<gene>
    <name type="ORF">BATDEDRAFT_13412</name>
</gene>
<evidence type="ECO:0000255" key="1">
    <source>
        <dbReference type="HAMAP-Rule" id="MF_03148"/>
    </source>
</evidence>
<proteinExistence type="inferred from homology"/>
<comment type="function">
    <text evidence="1">Pyrophosphatase that hydrolyzes non-canonical purine nucleotides such as inosine triphosphate (ITP), deoxyinosine triphosphate (dITP) or xanthosine 5'-triphosphate (XTP) to their respective monophosphate derivatives. The enzyme does not distinguish between the deoxy- and ribose forms. Probably excludes non-canonical purines from RNA and DNA precursor pools, thus preventing their incorporation into RNA and DNA and avoiding chromosomal lesions.</text>
</comment>
<comment type="catalytic activity">
    <reaction evidence="1">
        <text>ITP + H2O = IMP + diphosphate + H(+)</text>
        <dbReference type="Rhea" id="RHEA:29399"/>
        <dbReference type="ChEBI" id="CHEBI:15377"/>
        <dbReference type="ChEBI" id="CHEBI:15378"/>
        <dbReference type="ChEBI" id="CHEBI:33019"/>
        <dbReference type="ChEBI" id="CHEBI:58053"/>
        <dbReference type="ChEBI" id="CHEBI:61402"/>
        <dbReference type="EC" id="3.6.1.66"/>
    </reaction>
    <physiologicalReaction direction="left-to-right" evidence="1">
        <dbReference type="Rhea" id="RHEA:29400"/>
    </physiologicalReaction>
</comment>
<comment type="catalytic activity">
    <reaction evidence="1">
        <text>dITP + H2O = dIMP + diphosphate + H(+)</text>
        <dbReference type="Rhea" id="RHEA:28342"/>
        <dbReference type="ChEBI" id="CHEBI:15377"/>
        <dbReference type="ChEBI" id="CHEBI:15378"/>
        <dbReference type="ChEBI" id="CHEBI:33019"/>
        <dbReference type="ChEBI" id="CHEBI:61194"/>
        <dbReference type="ChEBI" id="CHEBI:61382"/>
        <dbReference type="EC" id="3.6.1.66"/>
    </reaction>
    <physiologicalReaction direction="left-to-right" evidence="1">
        <dbReference type="Rhea" id="RHEA:28343"/>
    </physiologicalReaction>
</comment>
<comment type="catalytic activity">
    <reaction evidence="1">
        <text>XTP + H2O = XMP + diphosphate + H(+)</text>
        <dbReference type="Rhea" id="RHEA:28610"/>
        <dbReference type="ChEBI" id="CHEBI:15377"/>
        <dbReference type="ChEBI" id="CHEBI:15378"/>
        <dbReference type="ChEBI" id="CHEBI:33019"/>
        <dbReference type="ChEBI" id="CHEBI:57464"/>
        <dbReference type="ChEBI" id="CHEBI:61314"/>
        <dbReference type="EC" id="3.6.1.66"/>
    </reaction>
    <physiologicalReaction direction="left-to-right" evidence="1">
        <dbReference type="Rhea" id="RHEA:28611"/>
    </physiologicalReaction>
</comment>
<comment type="cofactor">
    <cofactor evidence="1">
        <name>Mg(2+)</name>
        <dbReference type="ChEBI" id="CHEBI:18420"/>
    </cofactor>
    <cofactor evidence="1">
        <name>Mn(2+)</name>
        <dbReference type="ChEBI" id="CHEBI:29035"/>
    </cofactor>
    <text evidence="1">Binds 1 divalent metal cation per subunit; can use either Mg(2+) or Mn(2+).</text>
</comment>
<comment type="subunit">
    <text evidence="1">Homodimer.</text>
</comment>
<comment type="subcellular location">
    <subcellularLocation>
        <location evidence="1">Cytoplasm</location>
    </subcellularLocation>
    <subcellularLocation>
        <location evidence="1">Nucleus</location>
    </subcellularLocation>
</comment>
<comment type="similarity">
    <text evidence="1">Belongs to the HAM1 NTPase family.</text>
</comment>
<sequence length="190" mass="20778">MQSVVFVTGNANKLREVQDIVGNALPMLTCHQLDLPELQGTTQTVSIHKAKTAAAILKTPVLIEDTSLGFVALNGLPGPYIKWFMESVGHVGLNAMLHGFDDKSAFALCTFAYCEPGHDPILFEGRTDGLIVHPRGPAGFGWDPIFQPCGFTTTYAEMDKDLKNSISHRYKALALVKEFFQSKSDLALHS</sequence>
<organism>
    <name type="scientific">Batrachochytrium dendrobatidis (strain JAM81 / FGSC 10211)</name>
    <name type="common">Frog chytrid fungus</name>
    <dbReference type="NCBI Taxonomy" id="684364"/>
    <lineage>
        <taxon>Eukaryota</taxon>
        <taxon>Fungi</taxon>
        <taxon>Fungi incertae sedis</taxon>
        <taxon>Chytridiomycota</taxon>
        <taxon>Chytridiomycota incertae sedis</taxon>
        <taxon>Chytridiomycetes</taxon>
        <taxon>Rhizophydiales</taxon>
        <taxon>Rhizophydiales incertae sedis</taxon>
        <taxon>Batrachochytrium</taxon>
    </lineage>
</organism>
<feature type="chain" id="PRO_0000413129" description="Inosine triphosphate pyrophosphatase">
    <location>
        <begin position="1"/>
        <end position="190"/>
    </location>
</feature>
<feature type="binding site" evidence="1">
    <location>
        <begin position="8"/>
        <end position="13"/>
    </location>
    <ligand>
        <name>ITP</name>
        <dbReference type="ChEBI" id="CHEBI:61402"/>
    </ligand>
</feature>
<feature type="binding site" evidence="1">
    <location>
        <position position="37"/>
    </location>
    <ligand>
        <name>Mg(2+)</name>
        <dbReference type="ChEBI" id="CHEBI:18420"/>
    </ligand>
</feature>
<feature type="binding site" evidence="1">
    <location>
        <position position="49"/>
    </location>
    <ligand>
        <name>ITP</name>
        <dbReference type="ChEBI" id="CHEBI:61402"/>
    </ligand>
</feature>
<feature type="binding site" evidence="1">
    <location>
        <begin position="65"/>
        <end position="66"/>
    </location>
    <ligand>
        <name>ITP</name>
        <dbReference type="ChEBI" id="CHEBI:61402"/>
    </ligand>
</feature>
<feature type="binding site" evidence="1">
    <location>
        <position position="82"/>
    </location>
    <ligand>
        <name>ITP</name>
        <dbReference type="ChEBI" id="CHEBI:61402"/>
    </ligand>
</feature>
<feature type="binding site" evidence="1">
    <location>
        <begin position="140"/>
        <end position="143"/>
    </location>
    <ligand>
        <name>ITP</name>
        <dbReference type="ChEBI" id="CHEBI:61402"/>
    </ligand>
</feature>
<feature type="binding site" evidence="1">
    <location>
        <position position="163"/>
    </location>
    <ligand>
        <name>ITP</name>
        <dbReference type="ChEBI" id="CHEBI:61402"/>
    </ligand>
</feature>
<feature type="binding site" evidence="1">
    <location>
        <begin position="168"/>
        <end position="169"/>
    </location>
    <ligand>
        <name>ITP</name>
        <dbReference type="ChEBI" id="CHEBI:61402"/>
    </ligand>
</feature>
<dbReference type="EC" id="3.6.1.66" evidence="1"/>
<dbReference type="EMBL" id="GL882889">
    <property type="protein sequence ID" value="EGF78175.1"/>
    <property type="molecule type" value="Genomic_DNA"/>
</dbReference>
<dbReference type="RefSeq" id="XP_006681005.1">
    <property type="nucleotide sequence ID" value="XM_006680942.1"/>
</dbReference>
<dbReference type="SMR" id="F4P9L8"/>
<dbReference type="FunCoup" id="F4P9L8">
    <property type="interactions" value="530"/>
</dbReference>
<dbReference type="STRING" id="684364.F4P9L8"/>
<dbReference type="GeneID" id="18236801"/>
<dbReference type="HOGENOM" id="CLU_082080_1_1_1"/>
<dbReference type="InParanoid" id="F4P9L8"/>
<dbReference type="OMA" id="YDPIFQP"/>
<dbReference type="OrthoDB" id="6288734at2759"/>
<dbReference type="Proteomes" id="UP000007241">
    <property type="component" value="Unassembled WGS sequence"/>
</dbReference>
<dbReference type="GO" id="GO:0005737">
    <property type="term" value="C:cytoplasm"/>
    <property type="evidence" value="ECO:0000318"/>
    <property type="project" value="GO_Central"/>
</dbReference>
<dbReference type="GO" id="GO:0005634">
    <property type="term" value="C:nucleus"/>
    <property type="evidence" value="ECO:0007669"/>
    <property type="project" value="UniProtKB-SubCell"/>
</dbReference>
<dbReference type="GO" id="GO:0035870">
    <property type="term" value="F:dITP diphosphatase activity"/>
    <property type="evidence" value="ECO:0007669"/>
    <property type="project" value="RHEA"/>
</dbReference>
<dbReference type="GO" id="GO:0036220">
    <property type="term" value="F:ITP diphosphatase activity"/>
    <property type="evidence" value="ECO:0007669"/>
    <property type="project" value="RHEA"/>
</dbReference>
<dbReference type="GO" id="GO:0046872">
    <property type="term" value="F:metal ion binding"/>
    <property type="evidence" value="ECO:0007669"/>
    <property type="project" value="UniProtKB-KW"/>
</dbReference>
<dbReference type="GO" id="GO:0047429">
    <property type="term" value="F:nucleoside triphosphate diphosphatase activity"/>
    <property type="evidence" value="ECO:0000318"/>
    <property type="project" value="GO_Central"/>
</dbReference>
<dbReference type="GO" id="GO:0000166">
    <property type="term" value="F:nucleotide binding"/>
    <property type="evidence" value="ECO:0007669"/>
    <property type="project" value="UniProtKB-KW"/>
</dbReference>
<dbReference type="GO" id="GO:0036222">
    <property type="term" value="F:XTP diphosphatase activity"/>
    <property type="evidence" value="ECO:0007669"/>
    <property type="project" value="RHEA"/>
</dbReference>
<dbReference type="GO" id="GO:0009204">
    <property type="term" value="P:deoxyribonucleoside triphosphate catabolic process"/>
    <property type="evidence" value="ECO:0007669"/>
    <property type="project" value="UniProtKB-UniRule"/>
</dbReference>
<dbReference type="GO" id="GO:0009143">
    <property type="term" value="P:nucleoside triphosphate catabolic process"/>
    <property type="evidence" value="ECO:0000318"/>
    <property type="project" value="GO_Central"/>
</dbReference>
<dbReference type="GO" id="GO:0009117">
    <property type="term" value="P:nucleotide metabolic process"/>
    <property type="evidence" value="ECO:0007669"/>
    <property type="project" value="UniProtKB-KW"/>
</dbReference>
<dbReference type="CDD" id="cd00515">
    <property type="entry name" value="HAM1"/>
    <property type="match status" value="1"/>
</dbReference>
<dbReference type="FunFam" id="3.90.950.10:FF:000009">
    <property type="entry name" value="Inosine triphosphate pyrophosphatase"/>
    <property type="match status" value="1"/>
</dbReference>
<dbReference type="Gene3D" id="3.90.950.10">
    <property type="match status" value="1"/>
</dbReference>
<dbReference type="HAMAP" id="MF_03148">
    <property type="entry name" value="HAM1_NTPase"/>
    <property type="match status" value="1"/>
</dbReference>
<dbReference type="InterPro" id="IPR027502">
    <property type="entry name" value="ITPase"/>
</dbReference>
<dbReference type="InterPro" id="IPR029001">
    <property type="entry name" value="ITPase-like_fam"/>
</dbReference>
<dbReference type="InterPro" id="IPR002637">
    <property type="entry name" value="RdgB/HAM1"/>
</dbReference>
<dbReference type="NCBIfam" id="TIGR00042">
    <property type="entry name" value="RdgB/HAM1 family non-canonical purine NTP pyrophosphatase"/>
    <property type="match status" value="1"/>
</dbReference>
<dbReference type="PANTHER" id="PTHR11067:SF9">
    <property type="entry name" value="INOSINE TRIPHOSPHATE PYROPHOSPHATASE"/>
    <property type="match status" value="1"/>
</dbReference>
<dbReference type="PANTHER" id="PTHR11067">
    <property type="entry name" value="INOSINE TRIPHOSPHATE PYROPHOSPHATASE/HAM1 PROTEIN"/>
    <property type="match status" value="1"/>
</dbReference>
<dbReference type="Pfam" id="PF01725">
    <property type="entry name" value="Ham1p_like"/>
    <property type="match status" value="1"/>
</dbReference>
<dbReference type="SUPFAM" id="SSF52972">
    <property type="entry name" value="ITPase-like"/>
    <property type="match status" value="1"/>
</dbReference>